<comment type="function">
    <text evidence="2">Cell wall formation.</text>
</comment>
<comment type="catalytic activity">
    <reaction evidence="2">
        <text>2 D-alanine + ATP = D-alanyl-D-alanine + ADP + phosphate + H(+)</text>
        <dbReference type="Rhea" id="RHEA:11224"/>
        <dbReference type="ChEBI" id="CHEBI:15378"/>
        <dbReference type="ChEBI" id="CHEBI:30616"/>
        <dbReference type="ChEBI" id="CHEBI:43474"/>
        <dbReference type="ChEBI" id="CHEBI:57416"/>
        <dbReference type="ChEBI" id="CHEBI:57822"/>
        <dbReference type="ChEBI" id="CHEBI:456216"/>
        <dbReference type="EC" id="6.3.2.4"/>
    </reaction>
</comment>
<comment type="cofactor">
    <cofactor evidence="1">
        <name>Mg(2+)</name>
        <dbReference type="ChEBI" id="CHEBI:18420"/>
    </cofactor>
    <cofactor evidence="1">
        <name>Mn(2+)</name>
        <dbReference type="ChEBI" id="CHEBI:29035"/>
    </cofactor>
    <text evidence="1">Binds 2 magnesium or manganese ions per subunit.</text>
</comment>
<comment type="pathway">
    <text evidence="2">Cell wall biogenesis; peptidoglycan biosynthesis.</text>
</comment>
<comment type="subcellular location">
    <subcellularLocation>
        <location evidence="2">Cytoplasm</location>
    </subcellularLocation>
</comment>
<comment type="similarity">
    <text evidence="2">Belongs to the D-alanine--D-alanine ligase family.</text>
</comment>
<gene>
    <name evidence="2" type="primary">ddl</name>
    <name type="ordered locus">RHOS4_06980</name>
    <name type="ORF">RSP_2111</name>
</gene>
<reference key="1">
    <citation type="submission" date="2005-09" db="EMBL/GenBank/DDBJ databases">
        <title>Complete sequence of chromosome 1 of Rhodobacter sphaeroides 2.4.1.</title>
        <authorList>
            <person name="Copeland A."/>
            <person name="Lucas S."/>
            <person name="Lapidus A."/>
            <person name="Barry K."/>
            <person name="Detter J.C."/>
            <person name="Glavina T."/>
            <person name="Hammon N."/>
            <person name="Israni S."/>
            <person name="Pitluck S."/>
            <person name="Richardson P."/>
            <person name="Mackenzie C."/>
            <person name="Choudhary M."/>
            <person name="Larimer F."/>
            <person name="Hauser L.J."/>
            <person name="Land M."/>
            <person name="Donohue T.J."/>
            <person name="Kaplan S."/>
        </authorList>
    </citation>
    <scope>NUCLEOTIDE SEQUENCE [LARGE SCALE GENOMIC DNA]</scope>
    <source>
        <strain>ATCC 17023 / DSM 158 / JCM 6121 / CCUG 31486 / LMG 2827 / NBRC 12203 / NCIMB 8253 / ATH 2.4.1.</strain>
    </source>
</reference>
<proteinExistence type="inferred from homology"/>
<evidence type="ECO:0000250" key="1"/>
<evidence type="ECO:0000255" key="2">
    <source>
        <dbReference type="HAMAP-Rule" id="MF_00047"/>
    </source>
</evidence>
<sequence>MAGQSGRTFPRVAVLMGGASTEREVSLSSGHSCSAALRDAGYEVTEVDAGPDLARVLAELSPDAVFNALHGRWGEDGCVQGLLEWLRIPYTHSGVLASALAMDKARAKEVFAAAGLPVTQSVLATPEEVRARHILPPPYVVKPNAEGSSVGVYIVHEDANGPPQLAADMPQDLMVETYVPGRELTVTVMGDRVLAVTDILSDGWYDYDAKYRPGGSRHIVPADLPAEITEACHDIALRAHRALGCRGISRSDLRWDEARGLAGLILLETNTQPGMTPTSLSPEQAAHCGYSFPEFCAWLVEDASCSR</sequence>
<name>DDL_CERS4</name>
<dbReference type="EC" id="6.3.2.4" evidence="2"/>
<dbReference type="EMBL" id="CP000143">
    <property type="protein sequence ID" value="ABA78266.1"/>
    <property type="molecule type" value="Genomic_DNA"/>
</dbReference>
<dbReference type="RefSeq" id="WP_011337244.1">
    <property type="nucleotide sequence ID" value="NZ_CP030271.1"/>
</dbReference>
<dbReference type="RefSeq" id="YP_352167.1">
    <property type="nucleotide sequence ID" value="NC_007493.2"/>
</dbReference>
<dbReference type="SMR" id="Q3J4L8"/>
<dbReference type="STRING" id="272943.RSP_2111"/>
<dbReference type="EnsemblBacteria" id="ABA78266">
    <property type="protein sequence ID" value="ABA78266"/>
    <property type="gene ID" value="RSP_2111"/>
</dbReference>
<dbReference type="GeneID" id="3719582"/>
<dbReference type="KEGG" id="rsp:RSP_2111"/>
<dbReference type="PATRIC" id="fig|272943.9.peg.1004"/>
<dbReference type="eggNOG" id="COG1181">
    <property type="taxonomic scope" value="Bacteria"/>
</dbReference>
<dbReference type="OrthoDB" id="9813261at2"/>
<dbReference type="PhylomeDB" id="Q3J4L8"/>
<dbReference type="UniPathway" id="UPA00219"/>
<dbReference type="Proteomes" id="UP000002703">
    <property type="component" value="Chromosome 1"/>
</dbReference>
<dbReference type="GO" id="GO:0005737">
    <property type="term" value="C:cytoplasm"/>
    <property type="evidence" value="ECO:0007669"/>
    <property type="project" value="UniProtKB-SubCell"/>
</dbReference>
<dbReference type="GO" id="GO:0005524">
    <property type="term" value="F:ATP binding"/>
    <property type="evidence" value="ECO:0007669"/>
    <property type="project" value="UniProtKB-KW"/>
</dbReference>
<dbReference type="GO" id="GO:0008716">
    <property type="term" value="F:D-alanine-D-alanine ligase activity"/>
    <property type="evidence" value="ECO:0007669"/>
    <property type="project" value="UniProtKB-UniRule"/>
</dbReference>
<dbReference type="GO" id="GO:0046872">
    <property type="term" value="F:metal ion binding"/>
    <property type="evidence" value="ECO:0007669"/>
    <property type="project" value="UniProtKB-KW"/>
</dbReference>
<dbReference type="GO" id="GO:0071555">
    <property type="term" value="P:cell wall organization"/>
    <property type="evidence" value="ECO:0007669"/>
    <property type="project" value="UniProtKB-KW"/>
</dbReference>
<dbReference type="GO" id="GO:0009252">
    <property type="term" value="P:peptidoglycan biosynthetic process"/>
    <property type="evidence" value="ECO:0007669"/>
    <property type="project" value="UniProtKB-UniRule"/>
</dbReference>
<dbReference type="GO" id="GO:0008360">
    <property type="term" value="P:regulation of cell shape"/>
    <property type="evidence" value="ECO:0007669"/>
    <property type="project" value="UniProtKB-KW"/>
</dbReference>
<dbReference type="Gene3D" id="3.40.50.20">
    <property type="match status" value="1"/>
</dbReference>
<dbReference type="Gene3D" id="3.30.1490.20">
    <property type="entry name" value="ATP-grasp fold, A domain"/>
    <property type="match status" value="1"/>
</dbReference>
<dbReference type="Gene3D" id="3.30.470.20">
    <property type="entry name" value="ATP-grasp fold, B domain"/>
    <property type="match status" value="1"/>
</dbReference>
<dbReference type="HAMAP" id="MF_00047">
    <property type="entry name" value="Dala_Dala_lig"/>
    <property type="match status" value="1"/>
</dbReference>
<dbReference type="InterPro" id="IPR011761">
    <property type="entry name" value="ATP-grasp"/>
</dbReference>
<dbReference type="InterPro" id="IPR013815">
    <property type="entry name" value="ATP_grasp_subdomain_1"/>
</dbReference>
<dbReference type="InterPro" id="IPR000291">
    <property type="entry name" value="D-Ala_lig_Van_CS"/>
</dbReference>
<dbReference type="InterPro" id="IPR005905">
    <property type="entry name" value="D_ala_D_ala"/>
</dbReference>
<dbReference type="InterPro" id="IPR011095">
    <property type="entry name" value="Dala_Dala_lig_C"/>
</dbReference>
<dbReference type="InterPro" id="IPR011127">
    <property type="entry name" value="Dala_Dala_lig_N"/>
</dbReference>
<dbReference type="InterPro" id="IPR016185">
    <property type="entry name" value="PreATP-grasp_dom_sf"/>
</dbReference>
<dbReference type="NCBIfam" id="TIGR01205">
    <property type="entry name" value="D_ala_D_alaTIGR"/>
    <property type="match status" value="1"/>
</dbReference>
<dbReference type="NCBIfam" id="NF002378">
    <property type="entry name" value="PRK01372.1"/>
    <property type="match status" value="1"/>
</dbReference>
<dbReference type="PANTHER" id="PTHR23132">
    <property type="entry name" value="D-ALANINE--D-ALANINE LIGASE"/>
    <property type="match status" value="1"/>
</dbReference>
<dbReference type="PANTHER" id="PTHR23132:SF23">
    <property type="entry name" value="D-ALANINE--D-ALANINE LIGASE B"/>
    <property type="match status" value="1"/>
</dbReference>
<dbReference type="Pfam" id="PF07478">
    <property type="entry name" value="Dala_Dala_lig_C"/>
    <property type="match status" value="1"/>
</dbReference>
<dbReference type="Pfam" id="PF01820">
    <property type="entry name" value="Dala_Dala_lig_N"/>
    <property type="match status" value="1"/>
</dbReference>
<dbReference type="PIRSF" id="PIRSF039102">
    <property type="entry name" value="Ddl/VanB"/>
    <property type="match status" value="1"/>
</dbReference>
<dbReference type="SUPFAM" id="SSF56059">
    <property type="entry name" value="Glutathione synthetase ATP-binding domain-like"/>
    <property type="match status" value="1"/>
</dbReference>
<dbReference type="SUPFAM" id="SSF52440">
    <property type="entry name" value="PreATP-grasp domain"/>
    <property type="match status" value="1"/>
</dbReference>
<dbReference type="PROSITE" id="PS50975">
    <property type="entry name" value="ATP_GRASP"/>
    <property type="match status" value="1"/>
</dbReference>
<dbReference type="PROSITE" id="PS00843">
    <property type="entry name" value="DALA_DALA_LIGASE_1"/>
    <property type="match status" value="1"/>
</dbReference>
<dbReference type="PROSITE" id="PS00844">
    <property type="entry name" value="DALA_DALA_LIGASE_2"/>
    <property type="match status" value="1"/>
</dbReference>
<organism>
    <name type="scientific">Cereibacter sphaeroides (strain ATCC 17023 / DSM 158 / JCM 6121 / CCUG 31486 / LMG 2827 / NBRC 12203 / NCIMB 8253 / ATH 2.4.1.)</name>
    <name type="common">Rhodobacter sphaeroides</name>
    <dbReference type="NCBI Taxonomy" id="272943"/>
    <lineage>
        <taxon>Bacteria</taxon>
        <taxon>Pseudomonadati</taxon>
        <taxon>Pseudomonadota</taxon>
        <taxon>Alphaproteobacteria</taxon>
        <taxon>Rhodobacterales</taxon>
        <taxon>Paracoccaceae</taxon>
        <taxon>Cereibacter</taxon>
    </lineage>
</organism>
<keyword id="KW-0067">ATP-binding</keyword>
<keyword id="KW-0133">Cell shape</keyword>
<keyword id="KW-0961">Cell wall biogenesis/degradation</keyword>
<keyword id="KW-0963">Cytoplasm</keyword>
<keyword id="KW-0436">Ligase</keyword>
<keyword id="KW-0460">Magnesium</keyword>
<keyword id="KW-0464">Manganese</keyword>
<keyword id="KW-0479">Metal-binding</keyword>
<keyword id="KW-0547">Nucleotide-binding</keyword>
<keyword id="KW-0573">Peptidoglycan synthesis</keyword>
<keyword id="KW-1185">Reference proteome</keyword>
<feature type="chain" id="PRO_0000341161" description="D-alanine--D-alanine ligase">
    <location>
        <begin position="1"/>
        <end position="307"/>
    </location>
</feature>
<feature type="domain" description="ATP-grasp" evidence="2">
    <location>
        <begin position="108"/>
        <end position="301"/>
    </location>
</feature>
<feature type="binding site" evidence="2">
    <location>
        <begin position="135"/>
        <end position="185"/>
    </location>
    <ligand>
        <name>ATP</name>
        <dbReference type="ChEBI" id="CHEBI:30616"/>
    </ligand>
</feature>
<feature type="binding site" evidence="2">
    <location>
        <position position="252"/>
    </location>
    <ligand>
        <name>Mg(2+)</name>
        <dbReference type="ChEBI" id="CHEBI:18420"/>
        <label>1</label>
    </ligand>
</feature>
<feature type="binding site" evidence="2">
    <location>
        <position position="268"/>
    </location>
    <ligand>
        <name>Mg(2+)</name>
        <dbReference type="ChEBI" id="CHEBI:18420"/>
        <label>1</label>
    </ligand>
</feature>
<feature type="binding site" evidence="2">
    <location>
        <position position="268"/>
    </location>
    <ligand>
        <name>Mg(2+)</name>
        <dbReference type="ChEBI" id="CHEBI:18420"/>
        <label>2</label>
    </ligand>
</feature>
<feature type="binding site" evidence="2">
    <location>
        <position position="270"/>
    </location>
    <ligand>
        <name>Mg(2+)</name>
        <dbReference type="ChEBI" id="CHEBI:18420"/>
        <label>2</label>
    </ligand>
</feature>
<accession>Q3J4L8</accession>
<protein>
    <recommendedName>
        <fullName evidence="2">D-alanine--D-alanine ligase</fullName>
        <ecNumber evidence="2">6.3.2.4</ecNumber>
    </recommendedName>
    <alternativeName>
        <fullName evidence="2">D-Ala-D-Ala ligase</fullName>
    </alternativeName>
    <alternativeName>
        <fullName evidence="2">D-alanylalanine synthetase</fullName>
    </alternativeName>
</protein>